<proteinExistence type="evidence at protein level"/>
<accession>P05020</accession>
<sequence length="348" mass="38827">MTAPSQVLKIRRPDDWHLHLRDGDMLKTVVPYTSEIYGRAIVMPNLAPPVTTVEAAVAYRQRILDAVPAGHDFTPLMTCYLTDSLDPNELERGFNEGVFTAAKLYPANATTNSSHGVTSIDAIMPVLERMEKIGMPLLVHGEVTHADIDIFDREARFIESVMEPLRQRLTALKVVFEHITTKDAADYVRDGNERLAATITPQHLMFNRNHMLVGGVRPHLYCLPILKRNIHQQALRELVASGFNRVFLGTDSAPHARHRKESSCGCAGCFNAPTALGSYATVFEEMNALQHFEAFCSVNGPQFYGLPVNDTFIELVREEQQVAESIALTDDTLVPFLAGETVRWSVKQ</sequence>
<keyword id="KW-0002">3D-structure</keyword>
<keyword id="KW-0903">Direct protein sequencing</keyword>
<keyword id="KW-0378">Hydrolase</keyword>
<keyword id="KW-0479">Metal-binding</keyword>
<keyword id="KW-0665">Pyrimidine biosynthesis</keyword>
<keyword id="KW-1185">Reference proteome</keyword>
<keyword id="KW-0862">Zinc</keyword>
<organism>
    <name type="scientific">Escherichia coli (strain K12)</name>
    <dbReference type="NCBI Taxonomy" id="83333"/>
    <lineage>
        <taxon>Bacteria</taxon>
        <taxon>Pseudomonadati</taxon>
        <taxon>Pseudomonadota</taxon>
        <taxon>Gammaproteobacteria</taxon>
        <taxon>Enterobacterales</taxon>
        <taxon>Enterobacteriaceae</taxon>
        <taxon>Escherichia</taxon>
    </lineage>
</organism>
<evidence type="ECO:0000255" key="1">
    <source>
        <dbReference type="HAMAP-Rule" id="MF_00219"/>
    </source>
</evidence>
<evidence type="ECO:0000269" key="2">
    <source>
    </source>
</evidence>
<evidence type="ECO:0000269" key="3">
    <source>
    </source>
</evidence>
<evidence type="ECO:0000269" key="4">
    <source>
    </source>
</evidence>
<evidence type="ECO:0000269" key="5">
    <source>
    </source>
</evidence>
<evidence type="ECO:0000269" key="6">
    <source>
    </source>
</evidence>
<evidence type="ECO:0000269" key="7">
    <source>
    </source>
</evidence>
<evidence type="ECO:0000269" key="8">
    <source>
    </source>
</evidence>
<evidence type="ECO:0000303" key="9">
    <source>
    </source>
</evidence>
<evidence type="ECO:0000305" key="10"/>
<evidence type="ECO:0000305" key="11">
    <source>
    </source>
</evidence>
<evidence type="ECO:0000305" key="12">
    <source>
    </source>
</evidence>
<evidence type="ECO:0000305" key="13">
    <source>
    </source>
</evidence>
<evidence type="ECO:0007744" key="14">
    <source>
        <dbReference type="PDB" id="1J79"/>
    </source>
</evidence>
<evidence type="ECO:0007744" key="15">
    <source>
        <dbReference type="PDB" id="1XGE"/>
    </source>
</evidence>
<evidence type="ECO:0007829" key="16">
    <source>
        <dbReference type="PDB" id="2E25"/>
    </source>
</evidence>
<evidence type="ECO:0007829" key="17">
    <source>
        <dbReference type="PDB" id="2Z26"/>
    </source>
</evidence>
<evidence type="ECO:0007829" key="18">
    <source>
        <dbReference type="PDB" id="6HG1"/>
    </source>
</evidence>
<gene>
    <name evidence="1 9" type="primary">pyrC</name>
    <name type="ordered locus">b1062</name>
    <name type="ordered locus">JW1049</name>
</gene>
<reference key="1">
    <citation type="journal article" date="1986" name="Eur. J. Biochem.">
        <title>Nucleotide sequence of the structural gene for dihydroorotase of Escherichia coli K12.</title>
        <authorList>
            <person name="Baeckstroem D."/>
            <person name="Sjoeberg R.-M."/>
            <person name="Lundberg L.G."/>
        </authorList>
    </citation>
    <scope>NUCLEOTIDE SEQUENCE [GENOMIC DNA]</scope>
    <source>
        <strain>K12</strain>
    </source>
</reference>
<reference key="2">
    <citation type="journal article" date="1987" name="J. Bacteriol.">
        <title>Nucleotide sequence and expression of the pyrC gene of Escherichia coli K-12.</title>
        <authorList>
            <person name="Wilson H.R."/>
            <person name="Chan P.T."/>
            <person name="Turnbough C.L. Jr."/>
        </authorList>
    </citation>
    <scope>NUCLEOTIDE SEQUENCE [GENOMIC DNA]</scope>
    <scope>INDUCTION</scope>
    <source>
        <strain>K12</strain>
    </source>
</reference>
<reference key="3">
    <citation type="journal article" date="1996" name="DNA Res.">
        <title>A 718-kb DNA sequence of the Escherichia coli K-12 genome corresponding to the 12.7-28.0 min region on the linkage map.</title>
        <authorList>
            <person name="Oshima T."/>
            <person name="Aiba H."/>
            <person name="Baba T."/>
            <person name="Fujita K."/>
            <person name="Hayashi K."/>
            <person name="Honjo A."/>
            <person name="Ikemoto K."/>
            <person name="Inada T."/>
            <person name="Itoh T."/>
            <person name="Kajihara M."/>
            <person name="Kanai K."/>
            <person name="Kashimoto K."/>
            <person name="Kimura S."/>
            <person name="Kitagawa M."/>
            <person name="Makino K."/>
            <person name="Masuda S."/>
            <person name="Miki T."/>
            <person name="Mizobuchi K."/>
            <person name="Mori H."/>
            <person name="Motomura K."/>
            <person name="Nakamura Y."/>
            <person name="Nashimoto H."/>
            <person name="Nishio Y."/>
            <person name="Saito N."/>
            <person name="Sampei G."/>
            <person name="Seki Y."/>
            <person name="Tagami H."/>
            <person name="Takemoto K."/>
            <person name="Wada C."/>
            <person name="Yamamoto Y."/>
            <person name="Yano M."/>
            <person name="Horiuchi T."/>
        </authorList>
    </citation>
    <scope>NUCLEOTIDE SEQUENCE [LARGE SCALE GENOMIC DNA]</scope>
    <source>
        <strain>K12 / W3110 / ATCC 27325 / DSM 5911</strain>
    </source>
</reference>
<reference key="4">
    <citation type="journal article" date="1997" name="Science">
        <title>The complete genome sequence of Escherichia coli K-12.</title>
        <authorList>
            <person name="Blattner F.R."/>
            <person name="Plunkett G. III"/>
            <person name="Bloch C.A."/>
            <person name="Perna N.T."/>
            <person name="Burland V."/>
            <person name="Riley M."/>
            <person name="Collado-Vides J."/>
            <person name="Glasner J.D."/>
            <person name="Rode C.K."/>
            <person name="Mayhew G.F."/>
            <person name="Gregor J."/>
            <person name="Davis N.W."/>
            <person name="Kirkpatrick H.A."/>
            <person name="Goeden M.A."/>
            <person name="Rose D.J."/>
            <person name="Mau B."/>
            <person name="Shao Y."/>
        </authorList>
    </citation>
    <scope>NUCLEOTIDE SEQUENCE [LARGE SCALE GENOMIC DNA]</scope>
    <source>
        <strain>K12 / MG1655 / ATCC 47076</strain>
    </source>
</reference>
<reference key="5">
    <citation type="journal article" date="2006" name="Mol. Syst. Biol.">
        <title>Highly accurate genome sequences of Escherichia coli K-12 strains MG1655 and W3110.</title>
        <authorList>
            <person name="Hayashi K."/>
            <person name="Morooka N."/>
            <person name="Yamamoto Y."/>
            <person name="Fujita K."/>
            <person name="Isono K."/>
            <person name="Choi S."/>
            <person name="Ohtsubo E."/>
            <person name="Baba T."/>
            <person name="Wanner B.L."/>
            <person name="Mori H."/>
            <person name="Horiuchi T."/>
        </authorList>
    </citation>
    <scope>NUCLEOTIDE SEQUENCE [LARGE SCALE GENOMIC DNA]</scope>
    <source>
        <strain>K12 / W3110 / ATCC 27325 / DSM 5911</strain>
    </source>
</reference>
<reference key="6">
    <citation type="submission" date="1994-05" db="EMBL/GenBank/DDBJ databases">
        <authorList>
            <person name="Ohmori H."/>
        </authorList>
    </citation>
    <scope>NUCLEOTIDE SEQUENCE [GENOMIC DNA] OF 86-348</scope>
    <source>
        <strain>K12 / W3110 / ATCC 27325 / DSM 5911</strain>
    </source>
</reference>
<reference key="7">
    <citation type="journal article" date="1997" name="Electrophoresis">
        <title>Comparing the predicted and observed properties of proteins encoded in the genome of Escherichia coli K-12.</title>
        <authorList>
            <person name="Link A.J."/>
            <person name="Robison K."/>
            <person name="Church G.M."/>
        </authorList>
    </citation>
    <scope>PROTEIN SEQUENCE OF 2-13</scope>
    <source>
        <strain>K12 / EMG2</strain>
    </source>
</reference>
<reference key="8">
    <citation type="journal article" date="1984" name="J. Biol. Chem.">
        <title>Dihydroorotase from Escherichia coli. Purification and characterization.</title>
        <authorList>
            <person name="Washabaugh M.W."/>
            <person name="Collins K.D."/>
        </authorList>
    </citation>
    <scope>FUNCTION</scope>
    <scope>CATALYTIC ACTIVITY</scope>
    <scope>COFACTOR</scope>
    <scope>BIOPHYSICOCHEMICAL PROPERTIES</scope>
    <scope>SUBUNIT</scope>
</reference>
<reference key="9">
    <citation type="journal article" date="1991" name="J. Biol. Chem.">
        <title>Dihydroorotase from Escherichia coli. Substitution of Co(II) for the active site Zn(II).</title>
        <authorList>
            <person name="Brown D.C."/>
            <person name="Collins K.D."/>
        </authorList>
    </citation>
    <scope>COFACTOR</scope>
    <scope>ZINC-BINDING</scope>
</reference>
<reference key="10">
    <citation type="journal article" date="2004" name="Biochemistry">
        <title>Mechanism of the dihydroorotase reaction.</title>
        <authorList>
            <person name="Porter T.N."/>
            <person name="Li Y."/>
            <person name="Raushel F.M."/>
        </authorList>
    </citation>
    <scope>FUNCTION</scope>
    <scope>CATALYTIC ACTIVITY</scope>
    <scope>COFACTOR</scope>
    <scope>BIOPHYSICOCHEMICAL PROPERTIES</scope>
    <scope>ACTIVE SITE</scope>
    <scope>MUTAGENESIS OF ARG-21; ASN-45; ASP-251 AND HIS-255</scope>
</reference>
<reference evidence="14" key="11">
    <citation type="journal article" date="2001" name="Biochemistry">
        <title>Molecular structure of dihydroorotase: a paradigm for catalysis through the use of a binuclear metal center.</title>
        <authorList>
            <person name="Thoden J.B."/>
            <person name="Phillips G.N. Jr."/>
            <person name="Neal T.M."/>
            <person name="Raushel F.M."/>
            <person name="Holden H.M."/>
        </authorList>
    </citation>
    <scope>X-RAY CRYSTALLOGRAPHY (1.70 ANGSTROMS) OF 2-348 IN COMPLEX WITH OROTATE AND ZINC</scope>
    <scope>COFACTOR</scope>
    <scope>SUBUNIT</scope>
    <scope>CARBOXYLATION AT LYS-103</scope>
</reference>
<reference evidence="15" key="12">
    <citation type="journal article" date="2005" name="J. Mol. Biol.">
        <title>Dihydroorotase from Escherichia coli: loop movement and cooperativity between subunits.</title>
        <authorList>
            <person name="Lee M."/>
            <person name="Chan C.W."/>
            <person name="Mitchell Guss J."/>
            <person name="Christopherson R.I."/>
            <person name="Maher M.J."/>
        </authorList>
    </citation>
    <scope>X-RAY CRYSTALLOGRAPHY (1.90 ANGSTROMS) OF 2-348 IN COMPLEX WITH L-DIHYDROOROTATE AND ZINC</scope>
    <scope>COFACTOR</scope>
    <scope>SUBUNIT</scope>
    <scope>DOMAIN</scope>
    <scope>CARBOXYLATION AT LYS-103</scope>
</reference>
<name>PYRC_ECOLI</name>
<protein>
    <recommendedName>
        <fullName evidence="1">Dihydroorotase</fullName>
        <shortName evidence="1">DHOase</shortName>
        <ecNumber evidence="1 3 7">3.5.2.3</ecNumber>
    </recommendedName>
</protein>
<feature type="initiator methionine" description="Removed" evidence="8">
    <location>
        <position position="1"/>
    </location>
</feature>
<feature type="chain" id="PRO_0000147205" description="Dihydroorotase">
    <location>
        <begin position="2"/>
        <end position="348"/>
    </location>
</feature>
<feature type="active site" evidence="1 12">
    <location>
        <position position="251"/>
    </location>
</feature>
<feature type="binding site" evidence="1 2 4 14 15">
    <location>
        <position position="17"/>
    </location>
    <ligand>
        <name>Zn(2+)</name>
        <dbReference type="ChEBI" id="CHEBI:29105"/>
        <label>1</label>
    </ligand>
</feature>
<feature type="binding site" evidence="1 11 13 14 15">
    <location>
        <begin position="19"/>
        <end position="21"/>
    </location>
    <ligand>
        <name>substrate</name>
    </ligand>
</feature>
<feature type="binding site" evidence="1 2 4 14 15">
    <location>
        <position position="19"/>
    </location>
    <ligand>
        <name>Zn(2+)</name>
        <dbReference type="ChEBI" id="CHEBI:29105"/>
        <label>1</label>
    </ligand>
</feature>
<feature type="binding site" evidence="1 11 13 14 15">
    <location>
        <position position="45"/>
    </location>
    <ligand>
        <name>substrate</name>
    </ligand>
</feature>
<feature type="binding site" description="via carbamate group" evidence="1 2 4 14 15">
    <location>
        <position position="103"/>
    </location>
    <ligand>
        <name>Zn(2+)</name>
        <dbReference type="ChEBI" id="CHEBI:29105"/>
        <label>1</label>
    </ligand>
</feature>
<feature type="binding site" description="via carbamate group" evidence="1 2 4 14 15">
    <location>
        <position position="103"/>
    </location>
    <ligand>
        <name>Zn(2+)</name>
        <dbReference type="ChEBI" id="CHEBI:29105"/>
        <label>2</label>
    </ligand>
</feature>
<feature type="binding site" evidence="1 13 15">
    <location>
        <position position="140"/>
    </location>
    <ligand>
        <name>substrate</name>
    </ligand>
</feature>
<feature type="binding site" evidence="1 2 4 14 15">
    <location>
        <position position="140"/>
    </location>
    <ligand>
        <name>Zn(2+)</name>
        <dbReference type="ChEBI" id="CHEBI:29105"/>
        <label>2</label>
    </ligand>
</feature>
<feature type="binding site" evidence="1 2 4 14 15">
    <location>
        <position position="178"/>
    </location>
    <ligand>
        <name>Zn(2+)</name>
        <dbReference type="ChEBI" id="CHEBI:29105"/>
        <label>2</label>
    </ligand>
</feature>
<feature type="binding site" evidence="1 11 13 14 15">
    <location>
        <position position="223"/>
    </location>
    <ligand>
        <name>substrate</name>
    </ligand>
</feature>
<feature type="binding site" evidence="1 2 4 14 15">
    <location>
        <position position="251"/>
    </location>
    <ligand>
        <name>Zn(2+)</name>
        <dbReference type="ChEBI" id="CHEBI:29105"/>
        <label>1</label>
    </ligand>
</feature>
<feature type="binding site" evidence="1 11 13 14 15">
    <location>
        <position position="255"/>
    </location>
    <ligand>
        <name>substrate</name>
    </ligand>
</feature>
<feature type="binding site" evidence="1 11 13 14 15">
    <location>
        <position position="267"/>
    </location>
    <ligand>
        <name>substrate</name>
    </ligand>
</feature>
<feature type="modified residue" description="N6-carboxylysine" evidence="1 2 4 14 15">
    <location>
        <position position="103"/>
    </location>
</feature>
<feature type="mutagenesis site" description="9-fold decrease in catalytic efficiency with carbamoyl aspartate as substrate." evidence="3">
    <original>R</original>
    <variation>K</variation>
    <location>
        <position position="21"/>
    </location>
</feature>
<feature type="mutagenesis site" description="Lack of activity." evidence="3">
    <original>R</original>
    <variation>M</variation>
    <variation>Q</variation>
    <location>
        <position position="21"/>
    </location>
</feature>
<feature type="mutagenesis site" description="Lack of activity." evidence="3">
    <original>N</original>
    <variation>A</variation>
    <location>
        <position position="45"/>
    </location>
</feature>
<feature type="mutagenesis site" description="Lack of activity." evidence="3">
    <original>D</original>
    <variation>A</variation>
    <variation>H</variation>
    <variation>N</variation>
    <location>
        <position position="251"/>
    </location>
</feature>
<feature type="mutagenesis site" description="24-fold decrease in catalytic efficiency with carbamoyl aspartate as substrate." evidence="3">
    <original>D</original>
    <variation>E</variation>
    <location>
        <position position="251"/>
    </location>
</feature>
<feature type="mutagenesis site" description="3500-fold decrease in catalytic efficiency with carbamoyl aspartate as substrate." evidence="3">
    <original>D</original>
    <variation>S</variation>
    <location>
        <position position="251"/>
    </location>
</feature>
<feature type="mutagenesis site" description="Lack of activity." evidence="3">
    <original>H</original>
    <variation>N</variation>
    <location>
        <position position="255"/>
    </location>
</feature>
<feature type="strand" evidence="17">
    <location>
        <begin position="7"/>
        <end position="11"/>
    </location>
</feature>
<feature type="strand" evidence="17">
    <location>
        <begin position="15"/>
        <end position="18"/>
    </location>
</feature>
<feature type="helix" evidence="17">
    <location>
        <begin position="23"/>
        <end position="34"/>
    </location>
</feature>
<feature type="strand" evidence="17">
    <location>
        <begin position="38"/>
        <end position="42"/>
    </location>
</feature>
<feature type="helix" evidence="17">
    <location>
        <begin position="53"/>
        <end position="65"/>
    </location>
</feature>
<feature type="strand" evidence="17">
    <location>
        <begin position="74"/>
        <end position="80"/>
    </location>
</feature>
<feature type="helix" evidence="17">
    <location>
        <begin position="87"/>
        <end position="95"/>
    </location>
</feature>
<feature type="strand" evidence="17">
    <location>
        <begin position="98"/>
        <end position="104"/>
    </location>
</feature>
<feature type="strand" evidence="18">
    <location>
        <begin position="108"/>
        <end position="110"/>
    </location>
</feature>
<feature type="turn" evidence="17">
    <location>
        <begin position="113"/>
        <end position="115"/>
    </location>
</feature>
<feature type="helix" evidence="17">
    <location>
        <begin position="120"/>
        <end position="123"/>
    </location>
</feature>
<feature type="helix" evidence="17">
    <location>
        <begin position="124"/>
        <end position="133"/>
    </location>
</feature>
<feature type="strand" evidence="17">
    <location>
        <begin position="137"/>
        <end position="139"/>
    </location>
</feature>
<feature type="helix" evidence="17">
    <location>
        <begin position="150"/>
        <end position="152"/>
    </location>
</feature>
<feature type="helix" evidence="17">
    <location>
        <begin position="153"/>
        <end position="160"/>
    </location>
</feature>
<feature type="helix" evidence="17">
    <location>
        <begin position="162"/>
        <end position="168"/>
    </location>
</feature>
<feature type="turn" evidence="16">
    <location>
        <begin position="169"/>
        <end position="171"/>
    </location>
</feature>
<feature type="strand" evidence="17">
    <location>
        <begin position="174"/>
        <end position="176"/>
    </location>
</feature>
<feature type="helix" evidence="17">
    <location>
        <begin position="182"/>
        <end position="189"/>
    </location>
</feature>
<feature type="strand" evidence="17">
    <location>
        <begin position="195"/>
        <end position="199"/>
    </location>
</feature>
<feature type="helix" evidence="17">
    <location>
        <begin position="201"/>
        <end position="205"/>
    </location>
</feature>
<feature type="helix" evidence="17">
    <location>
        <begin position="208"/>
        <end position="212"/>
    </location>
</feature>
<feature type="helix" evidence="17">
    <location>
        <begin position="218"/>
        <end position="220"/>
    </location>
</feature>
<feature type="helix" evidence="17">
    <location>
        <begin position="229"/>
        <end position="240"/>
    </location>
</feature>
<feature type="strand" evidence="17">
    <location>
        <begin position="246"/>
        <end position="248"/>
    </location>
</feature>
<feature type="helix" evidence="17">
    <location>
        <begin position="257"/>
        <end position="260"/>
    </location>
</feature>
<feature type="strand" evidence="17">
    <location>
        <begin position="261"/>
        <end position="265"/>
    </location>
</feature>
<feature type="turn" evidence="17">
    <location>
        <begin position="272"/>
        <end position="274"/>
    </location>
</feature>
<feature type="helix" evidence="17">
    <location>
        <begin position="275"/>
        <end position="285"/>
    </location>
</feature>
<feature type="helix" evidence="17">
    <location>
        <begin position="289"/>
        <end position="291"/>
    </location>
</feature>
<feature type="helix" evidence="17">
    <location>
        <begin position="292"/>
        <end position="297"/>
    </location>
</feature>
<feature type="helix" evidence="17">
    <location>
        <begin position="299"/>
        <end position="304"/>
    </location>
</feature>
<feature type="strand" evidence="17">
    <location>
        <begin position="312"/>
        <end position="316"/>
    </location>
</feature>
<feature type="strand" evidence="17">
    <location>
        <begin position="329"/>
        <end position="333"/>
    </location>
</feature>
<feature type="turn" evidence="17">
    <location>
        <begin position="336"/>
        <end position="339"/>
    </location>
</feature>
<feature type="strand" evidence="17">
    <location>
        <begin position="341"/>
        <end position="343"/>
    </location>
</feature>
<comment type="function">
    <text evidence="1 3 7">Catalyzes the reversible cyclization of carbamoyl aspartate to dihydroorotate.</text>
</comment>
<comment type="catalytic activity">
    <reaction evidence="1 3 7">
        <text>(S)-dihydroorotate + H2O = N-carbamoyl-L-aspartate + H(+)</text>
        <dbReference type="Rhea" id="RHEA:24296"/>
        <dbReference type="ChEBI" id="CHEBI:15377"/>
        <dbReference type="ChEBI" id="CHEBI:15378"/>
        <dbReference type="ChEBI" id="CHEBI:30864"/>
        <dbReference type="ChEBI" id="CHEBI:32814"/>
        <dbReference type="EC" id="3.5.2.3"/>
    </reaction>
</comment>
<comment type="cofactor">
    <cofactor evidence="1 2 3 4 5 7">
        <name>Zn(2+)</name>
        <dbReference type="ChEBI" id="CHEBI:29105"/>
    </cofactor>
    <text evidence="2 3 4 5 7">Binds 2 Zn(2+) ions per subunit (PubMed:11401542, PubMed:15826651, PubMed:6142052). In vitro, can also use Co(2+) or Cd(2+) (PubMed:15610022, PubMed:1671037).</text>
</comment>
<comment type="biophysicochemical properties">
    <kinetics>
        <KM evidence="7">0.0756 mM for dihydroorotate</KM>
        <KM evidence="3">0.08 mM for dihydroorotate (in the presence of Zn(2+))</KM>
        <KM evidence="3">0.7 mM for dihydroorotate (in the presence of Co(2+))</KM>
        <KM evidence="3">0.23 mM for dihydroorotate (in the presence of Cd(2+))</KM>
        <KM evidence="7">1.07 mM for N-carbamoyl-DL-aspartate</KM>
        <KM evidence="3">1.7 mM for carbamoyl aspartate (in the presence of Zn(2+))</KM>
        <KM evidence="3">15 mM for carbamoyl aspartate (in the presence of Co(2+))</KM>
        <KM evidence="3">4 mM for carbamoyl aspartate (in the presence of Cd(2+))</KM>
        <text evidence="3 7">kcat is 127 sec(-1) with dihydroorotate as substrate and 195 sec(-1) with N-carbamoyl-DL-aspartate as substrate (PubMed:6142052). kcat is 100 sec(-1) with dihydroorotate as substrate and 160 sec(-1) with carbamoyl aspartate as substrate in the presence of Zn(2+). kcat is 15 sec(-1) with dihydroorotate as substrate and 25 sec(-1) with carbamoyl aspartate as substrate in the presence of Co(2+). kcat is 1.9 sec(-1) with dihydroorotate as substrate and 8.2 sec(-1) with carbamoyl aspartate as substrate in the presence of Cd(2+) (PubMed:15610022).</text>
    </kinetics>
</comment>
<comment type="pathway">
    <text evidence="1 10">Pyrimidine metabolism; UMP biosynthesis via de novo pathway; (S)-dihydroorotate from bicarbonate: step 3/3.</text>
</comment>
<comment type="subunit">
    <text evidence="1 2 4 7">Homodimer.</text>
</comment>
<comment type="induction">
    <text evidence="6">Induced by pyrimidine limitation.</text>
</comment>
<comment type="domain">
    <text evidence="4">There is an asymmetry between active sites in the dimer, with dihydroorotate bound to the active site of subunit A and N-carbamoyl-L-aspartate bound to the active site of subunit B.</text>
</comment>
<comment type="similarity">
    <text evidence="1 10">Belongs to the metallo-dependent hydrolases superfamily. DHOase family. Class II DHOase subfamily.</text>
</comment>
<dbReference type="EC" id="3.5.2.3" evidence="1 3 7"/>
<dbReference type="EMBL" id="X04469">
    <property type="protein sequence ID" value="CAA28157.1"/>
    <property type="molecule type" value="Genomic_DNA"/>
</dbReference>
<dbReference type="EMBL" id="M16752">
    <property type="protein sequence ID" value="AAA24482.1"/>
    <property type="molecule type" value="Genomic_DNA"/>
</dbReference>
<dbReference type="EMBL" id="U00096">
    <property type="protein sequence ID" value="AAC74146.1"/>
    <property type="molecule type" value="Genomic_DNA"/>
</dbReference>
<dbReference type="EMBL" id="AP009048">
    <property type="protein sequence ID" value="BAA35870.1"/>
    <property type="molecule type" value="Genomic_DNA"/>
</dbReference>
<dbReference type="EMBL" id="D31709">
    <property type="protein sequence ID" value="BAA06514.1"/>
    <property type="molecule type" value="Genomic_DNA"/>
</dbReference>
<dbReference type="PIR" id="A25008">
    <property type="entry name" value="DEECOO"/>
</dbReference>
<dbReference type="RefSeq" id="NP_415580.1">
    <property type="nucleotide sequence ID" value="NC_000913.3"/>
</dbReference>
<dbReference type="RefSeq" id="WP_000126534.1">
    <property type="nucleotide sequence ID" value="NZ_SSZK01000053.1"/>
</dbReference>
<dbReference type="PDB" id="1J79">
    <property type="method" value="X-ray"/>
    <property type="resolution" value="1.70 A"/>
    <property type="chains" value="A/B=2-348"/>
</dbReference>
<dbReference type="PDB" id="1XGE">
    <property type="method" value="X-ray"/>
    <property type="resolution" value="1.90 A"/>
    <property type="chains" value="A/B=2-348"/>
</dbReference>
<dbReference type="PDB" id="2E25">
    <property type="method" value="X-ray"/>
    <property type="resolution" value="2.70 A"/>
    <property type="chains" value="A=2-348"/>
</dbReference>
<dbReference type="PDB" id="2EG6">
    <property type="method" value="X-ray"/>
    <property type="resolution" value="1.70 A"/>
    <property type="chains" value="A/B=2-348"/>
</dbReference>
<dbReference type="PDB" id="2EG7">
    <property type="method" value="X-ray"/>
    <property type="resolution" value="2.00 A"/>
    <property type="chains" value="A/B=2-348"/>
</dbReference>
<dbReference type="PDB" id="2EG8">
    <property type="method" value="X-ray"/>
    <property type="resolution" value="2.20 A"/>
    <property type="chains" value="A/B=2-348"/>
</dbReference>
<dbReference type="PDB" id="2Z24">
    <property type="method" value="X-ray"/>
    <property type="resolution" value="1.90 A"/>
    <property type="chains" value="A/B=2-348"/>
</dbReference>
<dbReference type="PDB" id="2Z25">
    <property type="method" value="X-ray"/>
    <property type="resolution" value="1.87 A"/>
    <property type="chains" value="A/B=2-348"/>
</dbReference>
<dbReference type="PDB" id="2Z26">
    <property type="method" value="X-ray"/>
    <property type="resolution" value="1.29 A"/>
    <property type="chains" value="A/B=2-348"/>
</dbReference>
<dbReference type="PDB" id="2Z27">
    <property type="method" value="X-ray"/>
    <property type="resolution" value="1.87 A"/>
    <property type="chains" value="A/B=2-348"/>
</dbReference>
<dbReference type="PDB" id="2Z28">
    <property type="method" value="X-ray"/>
    <property type="resolution" value="1.87 A"/>
    <property type="chains" value="A/B=2-348"/>
</dbReference>
<dbReference type="PDB" id="2Z29">
    <property type="method" value="X-ray"/>
    <property type="resolution" value="1.90 A"/>
    <property type="chains" value="A/B=2-348"/>
</dbReference>
<dbReference type="PDB" id="2Z2A">
    <property type="method" value="X-ray"/>
    <property type="resolution" value="1.87 A"/>
    <property type="chains" value="A/B=2-348"/>
</dbReference>
<dbReference type="PDB" id="2Z2B">
    <property type="method" value="X-ray"/>
    <property type="resolution" value="1.85 A"/>
    <property type="chains" value="A=2-348"/>
</dbReference>
<dbReference type="PDB" id="6HG1">
    <property type="method" value="X-ray"/>
    <property type="resolution" value="2.12 A"/>
    <property type="chains" value="A=107-119"/>
</dbReference>
<dbReference type="PDBsum" id="1J79"/>
<dbReference type="PDBsum" id="1XGE"/>
<dbReference type="PDBsum" id="2E25"/>
<dbReference type="PDBsum" id="2EG6"/>
<dbReference type="PDBsum" id="2EG7"/>
<dbReference type="PDBsum" id="2EG8"/>
<dbReference type="PDBsum" id="2Z24"/>
<dbReference type="PDBsum" id="2Z25"/>
<dbReference type="PDBsum" id="2Z26"/>
<dbReference type="PDBsum" id="2Z27"/>
<dbReference type="PDBsum" id="2Z28"/>
<dbReference type="PDBsum" id="2Z29"/>
<dbReference type="PDBsum" id="2Z2A"/>
<dbReference type="PDBsum" id="2Z2B"/>
<dbReference type="PDBsum" id="6HG1"/>
<dbReference type="SMR" id="P05020"/>
<dbReference type="BioGRID" id="4261761">
    <property type="interactions" value="34"/>
</dbReference>
<dbReference type="BioGRID" id="850154">
    <property type="interactions" value="4"/>
</dbReference>
<dbReference type="DIP" id="DIP-10624N"/>
<dbReference type="FunCoup" id="P05020">
    <property type="interactions" value="680"/>
</dbReference>
<dbReference type="IntAct" id="P05020">
    <property type="interactions" value="6"/>
</dbReference>
<dbReference type="STRING" id="511145.b1062"/>
<dbReference type="BindingDB" id="P05020"/>
<dbReference type="DrugBank" id="DB02129">
    <property type="generic name" value="Dihydroorotic Acid"/>
</dbReference>
<dbReference type="DrugBank" id="DB03801">
    <property type="generic name" value="Lysine Nz-Carboxylic Acid"/>
</dbReference>
<dbReference type="DrugBank" id="DB04252">
    <property type="generic name" value="N-Carbamoylaspartic acid"/>
</dbReference>
<dbReference type="DrugBank" id="DB02262">
    <property type="generic name" value="Orotic acid"/>
</dbReference>
<dbReference type="MEROPS" id="M38.A02"/>
<dbReference type="jPOST" id="P05020"/>
<dbReference type="PaxDb" id="511145-b1062"/>
<dbReference type="EnsemblBacteria" id="AAC74146">
    <property type="protein sequence ID" value="AAC74146"/>
    <property type="gene ID" value="b1062"/>
</dbReference>
<dbReference type="GeneID" id="75203649"/>
<dbReference type="GeneID" id="945787"/>
<dbReference type="KEGG" id="ecj:JW1049"/>
<dbReference type="KEGG" id="eco:b1062"/>
<dbReference type="KEGG" id="ecoc:C3026_06455"/>
<dbReference type="PATRIC" id="fig|1411691.4.peg.1206"/>
<dbReference type="EchoBASE" id="EB0799"/>
<dbReference type="eggNOG" id="COG0418">
    <property type="taxonomic scope" value="Bacteria"/>
</dbReference>
<dbReference type="HOGENOM" id="CLU_041558_1_0_6"/>
<dbReference type="InParanoid" id="P05020"/>
<dbReference type="OMA" id="TLHHISM"/>
<dbReference type="OrthoDB" id="9808095at2"/>
<dbReference type="PhylomeDB" id="P05020"/>
<dbReference type="BioCyc" id="EcoCyc:DIHYDROOROT-MONOMER"/>
<dbReference type="BioCyc" id="MetaCyc:DIHYDROOROT-MONOMER"/>
<dbReference type="BRENDA" id="3.5.2.3">
    <property type="organism ID" value="2026"/>
</dbReference>
<dbReference type="SABIO-RK" id="P05020"/>
<dbReference type="UniPathway" id="UPA00070">
    <property type="reaction ID" value="UER00117"/>
</dbReference>
<dbReference type="EvolutionaryTrace" id="P05020"/>
<dbReference type="PRO" id="PR:P05020"/>
<dbReference type="Proteomes" id="UP000000625">
    <property type="component" value="Chromosome"/>
</dbReference>
<dbReference type="GO" id="GO:0005737">
    <property type="term" value="C:cytoplasm"/>
    <property type="evidence" value="ECO:0000318"/>
    <property type="project" value="GO_Central"/>
</dbReference>
<dbReference type="GO" id="GO:0005829">
    <property type="term" value="C:cytosol"/>
    <property type="evidence" value="ECO:0000314"/>
    <property type="project" value="EcoCyc"/>
</dbReference>
<dbReference type="GO" id="GO:0004151">
    <property type="term" value="F:dihydroorotase activity"/>
    <property type="evidence" value="ECO:0000314"/>
    <property type="project" value="EcoCyc"/>
</dbReference>
<dbReference type="GO" id="GO:0042803">
    <property type="term" value="F:protein homodimerization activity"/>
    <property type="evidence" value="ECO:0000314"/>
    <property type="project" value="EcoCyc"/>
</dbReference>
<dbReference type="GO" id="GO:0008270">
    <property type="term" value="F:zinc ion binding"/>
    <property type="evidence" value="ECO:0000314"/>
    <property type="project" value="EcoCyc"/>
</dbReference>
<dbReference type="GO" id="GO:0006207">
    <property type="term" value="P:'de novo' pyrimidine nucleobase biosynthetic process"/>
    <property type="evidence" value="ECO:0000315"/>
    <property type="project" value="EcoCyc"/>
</dbReference>
<dbReference type="GO" id="GO:0044205">
    <property type="term" value="P:'de novo' UMP biosynthetic process"/>
    <property type="evidence" value="ECO:0007669"/>
    <property type="project" value="UniProtKB-UniRule"/>
</dbReference>
<dbReference type="GO" id="GO:0006221">
    <property type="term" value="P:pyrimidine nucleotide biosynthetic process"/>
    <property type="evidence" value="ECO:0000318"/>
    <property type="project" value="GO_Central"/>
</dbReference>
<dbReference type="CDD" id="cd01294">
    <property type="entry name" value="DHOase"/>
    <property type="match status" value="1"/>
</dbReference>
<dbReference type="FunFam" id="3.20.20.140:FF:000006">
    <property type="entry name" value="Dihydroorotase"/>
    <property type="match status" value="1"/>
</dbReference>
<dbReference type="Gene3D" id="3.20.20.140">
    <property type="entry name" value="Metal-dependent hydrolases"/>
    <property type="match status" value="1"/>
</dbReference>
<dbReference type="HAMAP" id="MF_00219">
    <property type="entry name" value="PyrC_classII"/>
    <property type="match status" value="1"/>
</dbReference>
<dbReference type="InterPro" id="IPR006680">
    <property type="entry name" value="Amidohydro-rel"/>
</dbReference>
<dbReference type="InterPro" id="IPR004721">
    <property type="entry name" value="DHOdimr"/>
</dbReference>
<dbReference type="InterPro" id="IPR002195">
    <property type="entry name" value="Dihydroorotase_CS"/>
</dbReference>
<dbReference type="InterPro" id="IPR032466">
    <property type="entry name" value="Metal_Hydrolase"/>
</dbReference>
<dbReference type="NCBIfam" id="TIGR00856">
    <property type="entry name" value="pyrC_dimer"/>
    <property type="match status" value="1"/>
</dbReference>
<dbReference type="PANTHER" id="PTHR43137">
    <property type="entry name" value="DIHYDROOROTASE"/>
    <property type="match status" value="1"/>
</dbReference>
<dbReference type="PANTHER" id="PTHR43137:SF1">
    <property type="entry name" value="DIHYDROOROTASE"/>
    <property type="match status" value="1"/>
</dbReference>
<dbReference type="Pfam" id="PF01979">
    <property type="entry name" value="Amidohydro_1"/>
    <property type="match status" value="1"/>
</dbReference>
<dbReference type="PIRSF" id="PIRSF001237">
    <property type="entry name" value="DHOdimr"/>
    <property type="match status" value="1"/>
</dbReference>
<dbReference type="SUPFAM" id="SSF51556">
    <property type="entry name" value="Metallo-dependent hydrolases"/>
    <property type="match status" value="1"/>
</dbReference>
<dbReference type="PROSITE" id="PS00482">
    <property type="entry name" value="DIHYDROOROTASE_1"/>
    <property type="match status" value="1"/>
</dbReference>
<dbReference type="PROSITE" id="PS00483">
    <property type="entry name" value="DIHYDROOROTASE_2"/>
    <property type="match status" value="1"/>
</dbReference>